<reference key="1">
    <citation type="journal article" date="2012" name="J. Bacteriol.">
        <title>Complete genome sequence of the metabolically versatile halophilic archaeon Haloferax mediterranei, a poly(3-hydroxybutyrate-co-3-hydroxyvalerate) producer.</title>
        <authorList>
            <person name="Han J."/>
            <person name="Zhang F."/>
            <person name="Hou J."/>
            <person name="Liu X."/>
            <person name="Li M."/>
            <person name="Liu H."/>
            <person name="Cai L."/>
            <person name="Zhang B."/>
            <person name="Chen Y."/>
            <person name="Zhou J."/>
            <person name="Hu S."/>
            <person name="Xiang H."/>
        </authorList>
    </citation>
    <scope>NUCLEOTIDE SEQUENCE [LARGE SCALE GENOMIC DNA]</scope>
    <source>
        <strain>ATCC 33500 / DSM 1411 / JCM 8866 / NBRC 14739 / NCIMB 2177 / R-4</strain>
    </source>
</reference>
<reference key="2">
    <citation type="journal article" date="2013" name="J. Bacteriol.">
        <title>Characterization of CRISPR RNA biogenesis and Cas6 cleavage-mediated inhibition of a provirus in the haloarchaeon Haloferax mediterranei.</title>
        <authorList>
            <person name="Li M."/>
            <person name="Liu H."/>
            <person name="Han J."/>
            <person name="Liu J."/>
            <person name="Wang R."/>
            <person name="Zhao D."/>
            <person name="Zhou J."/>
            <person name="Xiang H."/>
        </authorList>
    </citation>
    <scope>FUNCTION</scope>
    <scope>DISRUPTION PHENOTYPE</scope>
    <source>
        <strain>ATCC 33500 / DSM 1411 / JCM 8866 / NBRC 14739 / NCIMB 2177 / R-4</strain>
    </source>
</reference>
<protein>
    <recommendedName>
        <fullName>CRISPR-associated endoribonuclease Cas6</fullName>
        <ecNumber>3.1.-.-</ecNumber>
    </recommendedName>
</protein>
<gene>
    <name type="primary">cas6</name>
    <name type="ordered locus">HFX_6314</name>
</gene>
<comment type="function">
    <text evidence="2">CRISPR (clustered regularly interspaced short palindromic repeat) is an adaptive immune system that provides protection against mobile genetic elements (viruses, transposable elements and conjugative plasmids). CRISPR clusters contain sequences complementary to antecedent mobile elements and target invading nucleic acids. CRISPR clusters are transcribed and processed into CRISPR RNA (crRNA). This protein probably processes pre-crRNA into individual crRNA units, and also plays a role in generation or stability of the CRISPR leader-repeat transcript. Cleaves an endogenous (non-invading) RNA; cuts a specific site within a sequence nearly identical to the cognate CRISPR repeat sequence in the 5' UTR of the transcript of provirus gene phiH, found in provirus 1. This digestion might be responsible for inhibiting (defective) provirus 1 excision.</text>
</comment>
<comment type="disruption phenotype">
    <text evidence="2">Does not produce mature length crRNA; precursor is non-specifically degraded. No accumulation of the CRISPR leader-repeat transcript. Allows excision of defective provirus 1 from its chromosomal locus (detected as restoration of the attachment site attA).</text>
</comment>
<comment type="miscellaneous">
    <text evidence="3">There are 6 CRISPR RNA loci in this organism and a single cas gene locus. A CRISPR-Cas type I-B system.</text>
</comment>
<comment type="similarity">
    <text evidence="4">Belongs to the CRISPR-associated protein Cas6/Cse3/CasE family.</text>
</comment>
<sequence length="270" mass="30616">MRLMVHLEAQRDATYQTAYHHKLRGRVWRALEGSKFDSEHDNGHPLGLAFSNIFPWGKIQEGDRRSLLFASPREDLLATIARGLQRNRDFNVGEMSFEVDDLSQLTVDVGEPGTRGVIETATGVVVRLTPEHREQYGIEAEHDAPTYWRPEHTIKPFKDAIRANLQHKHDRFAHEYQDGPTDVDGELFEGYDLLKTYALPVTVTTGTTLDVVLSKWRFDYRVRNDAHRHHLNLALDAGIGGRNGLGFGFSNIVEKTKPGESELERADAFA</sequence>
<proteinExistence type="inferred from homology"/>
<feature type="chain" id="PRO_0000432152" description="CRISPR-associated endoribonuclease Cas6">
    <location>
        <begin position="1"/>
        <end position="270"/>
    </location>
</feature>
<feature type="active site" description="Proton donor" evidence="1">
    <location>
        <position position="41"/>
    </location>
</feature>
<geneLocation type="plasmid">
    <name>pHM500</name>
</geneLocation>
<accession>I3RB26</accession>
<name>CAS6_HALMT</name>
<dbReference type="EC" id="3.1.-.-"/>
<dbReference type="EMBL" id="CP001871">
    <property type="protein sequence ID" value="AFK21436.1"/>
    <property type="molecule type" value="Genomic_DNA"/>
</dbReference>
<dbReference type="RefSeq" id="WP_014732817.1">
    <property type="nucleotide sequence ID" value="NC_017944.1"/>
</dbReference>
<dbReference type="SMR" id="I3RB26"/>
<dbReference type="GeneID" id="40158021"/>
<dbReference type="KEGG" id="hme:HFX_6314"/>
<dbReference type="HOGENOM" id="CLU_089858_1_0_2"/>
<dbReference type="OrthoDB" id="43942at2157"/>
<dbReference type="Proteomes" id="UP000006469">
    <property type="component" value="Plasmid pHM500"/>
</dbReference>
<dbReference type="GO" id="GO:0004519">
    <property type="term" value="F:endonuclease activity"/>
    <property type="evidence" value="ECO:0007669"/>
    <property type="project" value="UniProtKB-KW"/>
</dbReference>
<dbReference type="GO" id="GO:0003723">
    <property type="term" value="F:RNA binding"/>
    <property type="evidence" value="ECO:0007669"/>
    <property type="project" value="UniProtKB-KW"/>
</dbReference>
<dbReference type="GO" id="GO:0051607">
    <property type="term" value="P:defense response to virus"/>
    <property type="evidence" value="ECO:0007669"/>
    <property type="project" value="UniProtKB-KW"/>
</dbReference>
<dbReference type="CDD" id="cd21140">
    <property type="entry name" value="Cas6_I-like"/>
    <property type="match status" value="1"/>
</dbReference>
<dbReference type="Gene3D" id="3.30.70.1890">
    <property type="match status" value="1"/>
</dbReference>
<dbReference type="Gene3D" id="3.30.70.1900">
    <property type="match status" value="1"/>
</dbReference>
<dbReference type="InterPro" id="IPR049435">
    <property type="entry name" value="Cas_Cas6_C"/>
</dbReference>
<dbReference type="InterPro" id="IPR010156">
    <property type="entry name" value="CRISPR-assoc_prot_Cas6"/>
</dbReference>
<dbReference type="InterPro" id="IPR045747">
    <property type="entry name" value="CRISPR-assoc_prot_Cas6_N_sf"/>
</dbReference>
<dbReference type="NCBIfam" id="TIGR01877">
    <property type="entry name" value="cas_cas6"/>
    <property type="match status" value="1"/>
</dbReference>
<dbReference type="PANTHER" id="PTHR36984">
    <property type="entry name" value="CRISPR-ASSOCIATED ENDORIBONUCLEASE CAS6 1"/>
    <property type="match status" value="1"/>
</dbReference>
<dbReference type="PANTHER" id="PTHR36984:SF1">
    <property type="entry name" value="CRISPR-ASSOCIATED ENDORIBONUCLEASE CAS6 1"/>
    <property type="match status" value="1"/>
</dbReference>
<dbReference type="Pfam" id="PF01881">
    <property type="entry name" value="Cas_Cas6_C"/>
    <property type="match status" value="1"/>
</dbReference>
<keyword id="KW-0051">Antiviral defense</keyword>
<keyword id="KW-0255">Endonuclease</keyword>
<keyword id="KW-0378">Hydrolase</keyword>
<keyword id="KW-0540">Nuclease</keyword>
<keyword id="KW-0614">Plasmid</keyword>
<keyword id="KW-0694">RNA-binding</keyword>
<evidence type="ECO:0000250" key="1">
    <source>
        <dbReference type="UniProtKB" id="D4GQN4"/>
    </source>
</evidence>
<evidence type="ECO:0000269" key="2">
    <source>
    </source>
</evidence>
<evidence type="ECO:0000303" key="3">
    <source>
    </source>
</evidence>
<evidence type="ECO:0000305" key="4"/>
<organism>
    <name type="scientific">Haloferax mediterranei (strain ATCC 33500 / DSM 1411 / JCM 8866 / NBRC 14739 / NCIMB 2177 / R-4)</name>
    <name type="common">Halobacterium mediterranei</name>
    <dbReference type="NCBI Taxonomy" id="523841"/>
    <lineage>
        <taxon>Archaea</taxon>
        <taxon>Methanobacteriati</taxon>
        <taxon>Methanobacteriota</taxon>
        <taxon>Stenosarchaea group</taxon>
        <taxon>Halobacteria</taxon>
        <taxon>Halobacteriales</taxon>
        <taxon>Haloferacaceae</taxon>
        <taxon>Haloferax</taxon>
    </lineage>
</organism>